<name>SUFE_YERPB</name>
<reference key="1">
    <citation type="submission" date="2008-04" db="EMBL/GenBank/DDBJ databases">
        <title>Complete sequence of Yersinia pseudotuberculosis PB1/+.</title>
        <authorList>
            <person name="Copeland A."/>
            <person name="Lucas S."/>
            <person name="Lapidus A."/>
            <person name="Glavina del Rio T."/>
            <person name="Dalin E."/>
            <person name="Tice H."/>
            <person name="Bruce D."/>
            <person name="Goodwin L."/>
            <person name="Pitluck S."/>
            <person name="Munk A.C."/>
            <person name="Brettin T."/>
            <person name="Detter J.C."/>
            <person name="Han C."/>
            <person name="Tapia R."/>
            <person name="Schmutz J."/>
            <person name="Larimer F."/>
            <person name="Land M."/>
            <person name="Hauser L."/>
            <person name="Challacombe J.F."/>
            <person name="Green L."/>
            <person name="Lindler L.E."/>
            <person name="Nikolich M.P."/>
            <person name="Richardson P."/>
        </authorList>
    </citation>
    <scope>NUCLEOTIDE SEQUENCE [LARGE SCALE GENOMIC DNA]</scope>
    <source>
        <strain>PB1/+</strain>
    </source>
</reference>
<feature type="chain" id="PRO_1000188339" description="Cysteine desulfuration protein SufE">
    <location>
        <begin position="1"/>
        <end position="140"/>
    </location>
</feature>
<feature type="active site" description="Cysteine persulfide intermediate" evidence="1">
    <location>
        <position position="51"/>
    </location>
</feature>
<comment type="function">
    <text evidence="1">Participates in cysteine desulfuration mediated by SufS. Cysteine desulfuration mobilizes sulfur from L-cysteine to yield L-alanine and constitutes an essential step in sulfur metabolism for biosynthesis of a variety of sulfur-containing biomolecules. Functions as a sulfur acceptor for SufS, by mediating the direct transfer of the sulfur atom from the S-sulfanylcysteine of SufS, an intermediate product of cysteine desulfuration process.</text>
</comment>
<comment type="pathway">
    <text evidence="1">Cofactor biosynthesis; iron-sulfur cluster biosynthesis.</text>
</comment>
<comment type="subunit">
    <text evidence="1">Homodimer. Interacts with SufS.</text>
</comment>
<comment type="subcellular location">
    <subcellularLocation>
        <location evidence="1">Cytoplasm</location>
    </subcellularLocation>
</comment>
<comment type="similarity">
    <text evidence="1">Belongs to the SufE family.</text>
</comment>
<evidence type="ECO:0000255" key="1">
    <source>
        <dbReference type="HAMAP-Rule" id="MF_01832"/>
    </source>
</evidence>
<accession>B2K5J3</accession>
<sequence length="140" mass="15581">MAGLPDRDKLIRNFSRCLNWEEKYLYIIELGGQLAPLTEQQRHPENLISGCQSQVWIAMTLSAEGHVIFAGDSDAAIVKGLVAVVFILYHDLTPQQIISLDVRPFFADLALSQHLTPSRSQGLEAMIRAIRTKVANLSAH</sequence>
<keyword id="KW-0963">Cytoplasm</keyword>
<dbReference type="EMBL" id="CP001048">
    <property type="protein sequence ID" value="ACC89344.1"/>
    <property type="molecule type" value="Genomic_DNA"/>
</dbReference>
<dbReference type="RefSeq" id="WP_002211804.1">
    <property type="nucleotide sequence ID" value="NZ_CP009780.1"/>
</dbReference>
<dbReference type="SMR" id="B2K5J3"/>
<dbReference type="GeneID" id="57976275"/>
<dbReference type="KEGG" id="ypb:YPTS_2383"/>
<dbReference type="PATRIC" id="fig|502801.10.peg.1788"/>
<dbReference type="UniPathway" id="UPA00266"/>
<dbReference type="GO" id="GO:0005737">
    <property type="term" value="C:cytoplasm"/>
    <property type="evidence" value="ECO:0007669"/>
    <property type="project" value="UniProtKB-SubCell"/>
</dbReference>
<dbReference type="GO" id="GO:0016226">
    <property type="term" value="P:iron-sulfur cluster assembly"/>
    <property type="evidence" value="ECO:0007669"/>
    <property type="project" value="InterPro"/>
</dbReference>
<dbReference type="GO" id="GO:0006790">
    <property type="term" value="P:sulfur compound metabolic process"/>
    <property type="evidence" value="ECO:0007669"/>
    <property type="project" value="InterPro"/>
</dbReference>
<dbReference type="Gene3D" id="3.90.1010.10">
    <property type="match status" value="1"/>
</dbReference>
<dbReference type="HAMAP" id="MF_01832">
    <property type="entry name" value="SufE"/>
    <property type="match status" value="1"/>
</dbReference>
<dbReference type="InterPro" id="IPR023939">
    <property type="entry name" value="Cysteine_desulfuration_SufE"/>
</dbReference>
<dbReference type="InterPro" id="IPR003808">
    <property type="entry name" value="Fe-S_metab-assoc_dom"/>
</dbReference>
<dbReference type="NCBIfam" id="NF006792">
    <property type="entry name" value="PRK09296.1"/>
    <property type="match status" value="1"/>
</dbReference>
<dbReference type="PANTHER" id="PTHR43597:SF3">
    <property type="entry name" value="CYSTEINE DESULFURATION PROTEIN SUFE"/>
    <property type="match status" value="1"/>
</dbReference>
<dbReference type="PANTHER" id="PTHR43597">
    <property type="entry name" value="SULFUR ACCEPTOR PROTEIN CSDE"/>
    <property type="match status" value="1"/>
</dbReference>
<dbReference type="Pfam" id="PF02657">
    <property type="entry name" value="SufE"/>
    <property type="match status" value="1"/>
</dbReference>
<dbReference type="SUPFAM" id="SSF82649">
    <property type="entry name" value="SufE/NifU"/>
    <property type="match status" value="1"/>
</dbReference>
<proteinExistence type="inferred from homology"/>
<gene>
    <name evidence="1" type="primary">sufE</name>
    <name type="ordered locus">YPTS_2383</name>
</gene>
<organism>
    <name type="scientific">Yersinia pseudotuberculosis serotype IB (strain PB1/+)</name>
    <dbReference type="NCBI Taxonomy" id="502801"/>
    <lineage>
        <taxon>Bacteria</taxon>
        <taxon>Pseudomonadati</taxon>
        <taxon>Pseudomonadota</taxon>
        <taxon>Gammaproteobacteria</taxon>
        <taxon>Enterobacterales</taxon>
        <taxon>Yersiniaceae</taxon>
        <taxon>Yersinia</taxon>
    </lineage>
</organism>
<protein>
    <recommendedName>
        <fullName evidence="1">Cysteine desulfuration protein SufE</fullName>
    </recommendedName>
</protein>